<accession>P55991</accession>
<protein>
    <recommendedName>
        <fullName evidence="1">DNA topoisomerase 1</fullName>
        <ecNumber evidence="1">5.6.2.1</ecNumber>
    </recommendedName>
    <alternativeName>
        <fullName evidence="1">DNA topoisomerase I</fullName>
    </alternativeName>
    <alternativeName>
        <fullName>Omega-protein</fullName>
    </alternativeName>
    <alternativeName>
        <fullName>Relaxing enzyme</fullName>
    </alternativeName>
    <alternativeName>
        <fullName>Swivelase</fullName>
    </alternativeName>
    <alternativeName>
        <fullName>Untwisting enzyme</fullName>
    </alternativeName>
</protein>
<comment type="function">
    <text evidence="1">Releases the supercoiling and torsional tension of DNA, which is introduced during the DNA replication and transcription, by transiently cleaving and rejoining one strand of the DNA duplex. Introduces a single-strand break via transesterification at a target site in duplex DNA. The scissile phosphodiester is attacked by the catalytic tyrosine of the enzyme, resulting in the formation of a DNA-(5'-phosphotyrosyl)-enzyme intermediate and the expulsion of a 3'-OH DNA strand. The free DNA strand then undergoes passage around the unbroken strand, thus removing DNA supercoils. Finally, in the religation step, the DNA 3'-OH attacks the covalent intermediate to expel the active-site tyrosine and restore the DNA phosphodiester backbone.</text>
</comment>
<comment type="catalytic activity">
    <reaction evidence="1">
        <text>ATP-independent breakage of single-stranded DNA, followed by passage and rejoining.</text>
        <dbReference type="EC" id="5.6.2.1"/>
    </reaction>
</comment>
<comment type="cofactor">
    <cofactor evidence="1">
        <name>Mg(2+)</name>
        <dbReference type="ChEBI" id="CHEBI:18420"/>
    </cofactor>
</comment>
<comment type="subunit">
    <text evidence="1">Monomer.</text>
</comment>
<comment type="interaction">
    <interactant intactId="EBI-7493738">
        <id>P55991</id>
    </interactant>
    <interactant intactId="EBI-7500288">
        <id>O26081</id>
        <label>HP_1559</label>
    </interactant>
    <organismsDiffer>false</organismsDiffer>
    <experiments>3</experiments>
</comment>
<comment type="similarity">
    <text evidence="1">Belongs to the type IA topoisomerase family.</text>
</comment>
<gene>
    <name evidence="1" type="primary">topA</name>
    <name type="ordered locus">HP_0116</name>
</gene>
<keyword id="KW-0238">DNA-binding</keyword>
<keyword id="KW-0413">Isomerase</keyword>
<keyword id="KW-0460">Magnesium</keyword>
<keyword id="KW-0479">Metal-binding</keyword>
<keyword id="KW-1185">Reference proteome</keyword>
<keyword id="KW-0677">Repeat</keyword>
<keyword id="KW-0799">Topoisomerase</keyword>
<keyword id="KW-0862">Zinc</keyword>
<keyword id="KW-0863">Zinc-finger</keyword>
<dbReference type="EC" id="5.6.2.1" evidence="1"/>
<dbReference type="EMBL" id="AE000511">
    <property type="protein sequence ID" value="AAD07184.1"/>
    <property type="molecule type" value="Genomic_DNA"/>
</dbReference>
<dbReference type="PIR" id="D64534">
    <property type="entry name" value="D64534"/>
</dbReference>
<dbReference type="RefSeq" id="NP_206916.1">
    <property type="nucleotide sequence ID" value="NC_000915.1"/>
</dbReference>
<dbReference type="RefSeq" id="WP_000681408.1">
    <property type="nucleotide sequence ID" value="NC_018939.1"/>
</dbReference>
<dbReference type="SMR" id="P55991"/>
<dbReference type="DIP" id="DIP-3057N"/>
<dbReference type="FunCoup" id="P55991">
    <property type="interactions" value="356"/>
</dbReference>
<dbReference type="IntAct" id="P55991">
    <property type="interactions" value="16"/>
</dbReference>
<dbReference type="MINT" id="P55991"/>
<dbReference type="STRING" id="85962.HP_0116"/>
<dbReference type="PaxDb" id="85962-C694_00575"/>
<dbReference type="EnsemblBacteria" id="AAD07184">
    <property type="protein sequence ID" value="AAD07184"/>
    <property type="gene ID" value="HP_0116"/>
</dbReference>
<dbReference type="KEGG" id="heo:C694_00575"/>
<dbReference type="KEGG" id="hpy:HP_0116"/>
<dbReference type="PATRIC" id="fig|85962.47.peg.125"/>
<dbReference type="eggNOG" id="COG0550">
    <property type="taxonomic scope" value="Bacteria"/>
</dbReference>
<dbReference type="eggNOG" id="COG0551">
    <property type="taxonomic scope" value="Bacteria"/>
</dbReference>
<dbReference type="InParanoid" id="P55991"/>
<dbReference type="OrthoDB" id="9804262at2"/>
<dbReference type="PhylomeDB" id="P55991"/>
<dbReference type="Proteomes" id="UP000000429">
    <property type="component" value="Chromosome"/>
</dbReference>
<dbReference type="GO" id="GO:0005694">
    <property type="term" value="C:chromosome"/>
    <property type="evidence" value="ECO:0007669"/>
    <property type="project" value="InterPro"/>
</dbReference>
<dbReference type="GO" id="GO:0003677">
    <property type="term" value="F:DNA binding"/>
    <property type="evidence" value="ECO:0007669"/>
    <property type="project" value="UniProtKB-KW"/>
</dbReference>
<dbReference type="GO" id="GO:0003917">
    <property type="term" value="F:DNA topoisomerase type I (single strand cut, ATP-independent) activity"/>
    <property type="evidence" value="ECO:0007669"/>
    <property type="project" value="UniProtKB-UniRule"/>
</dbReference>
<dbReference type="GO" id="GO:0008270">
    <property type="term" value="F:zinc ion binding"/>
    <property type="evidence" value="ECO:0007669"/>
    <property type="project" value="UniProtKB-KW"/>
</dbReference>
<dbReference type="GO" id="GO:0006265">
    <property type="term" value="P:DNA topological change"/>
    <property type="evidence" value="ECO:0007669"/>
    <property type="project" value="UniProtKB-UniRule"/>
</dbReference>
<dbReference type="CDD" id="cd00186">
    <property type="entry name" value="TOP1Ac"/>
    <property type="match status" value="1"/>
</dbReference>
<dbReference type="CDD" id="cd03363">
    <property type="entry name" value="TOPRIM_TopoIA_TopoI"/>
    <property type="match status" value="1"/>
</dbReference>
<dbReference type="Gene3D" id="3.40.50.140">
    <property type="match status" value="1"/>
</dbReference>
<dbReference type="Gene3D" id="3.30.65.10">
    <property type="entry name" value="Bacterial Topoisomerase I, domain 1"/>
    <property type="match status" value="3"/>
</dbReference>
<dbReference type="Gene3D" id="1.10.460.10">
    <property type="entry name" value="Topoisomerase I, domain 2"/>
    <property type="match status" value="1"/>
</dbReference>
<dbReference type="Gene3D" id="2.70.20.10">
    <property type="entry name" value="Topoisomerase I, domain 3"/>
    <property type="match status" value="1"/>
</dbReference>
<dbReference type="Gene3D" id="1.10.290.10">
    <property type="entry name" value="Topoisomerase I, domain 4"/>
    <property type="match status" value="1"/>
</dbReference>
<dbReference type="HAMAP" id="MF_00952">
    <property type="entry name" value="Topoisom_1_prok"/>
    <property type="match status" value="1"/>
</dbReference>
<dbReference type="InterPro" id="IPR000380">
    <property type="entry name" value="Topo_IA"/>
</dbReference>
<dbReference type="InterPro" id="IPR003601">
    <property type="entry name" value="Topo_IA_2"/>
</dbReference>
<dbReference type="InterPro" id="IPR023406">
    <property type="entry name" value="Topo_IA_AS"/>
</dbReference>
<dbReference type="InterPro" id="IPR013497">
    <property type="entry name" value="Topo_IA_cen"/>
</dbReference>
<dbReference type="InterPro" id="IPR013824">
    <property type="entry name" value="Topo_IA_cen_sub1"/>
</dbReference>
<dbReference type="InterPro" id="IPR013825">
    <property type="entry name" value="Topo_IA_cen_sub2"/>
</dbReference>
<dbReference type="InterPro" id="IPR013826">
    <property type="entry name" value="Topo_IA_cen_sub3"/>
</dbReference>
<dbReference type="InterPro" id="IPR023405">
    <property type="entry name" value="Topo_IA_core_domain"/>
</dbReference>
<dbReference type="InterPro" id="IPR003602">
    <property type="entry name" value="Topo_IA_DNA-bd_dom"/>
</dbReference>
<dbReference type="InterPro" id="IPR013498">
    <property type="entry name" value="Topo_IA_Znf"/>
</dbReference>
<dbReference type="InterPro" id="IPR005733">
    <property type="entry name" value="TopoI_bac-type"/>
</dbReference>
<dbReference type="InterPro" id="IPR028612">
    <property type="entry name" value="Topoisom_1_IA"/>
</dbReference>
<dbReference type="InterPro" id="IPR006171">
    <property type="entry name" value="TOPRIM_dom"/>
</dbReference>
<dbReference type="InterPro" id="IPR034149">
    <property type="entry name" value="TOPRIM_TopoI"/>
</dbReference>
<dbReference type="NCBIfam" id="TIGR01051">
    <property type="entry name" value="topA_bact"/>
    <property type="match status" value="1"/>
</dbReference>
<dbReference type="PANTHER" id="PTHR42785:SF1">
    <property type="entry name" value="DNA TOPOISOMERASE"/>
    <property type="match status" value="1"/>
</dbReference>
<dbReference type="PANTHER" id="PTHR42785">
    <property type="entry name" value="DNA TOPOISOMERASE, TYPE IA, CORE"/>
    <property type="match status" value="1"/>
</dbReference>
<dbReference type="Pfam" id="PF01131">
    <property type="entry name" value="Topoisom_bac"/>
    <property type="match status" value="1"/>
</dbReference>
<dbReference type="Pfam" id="PF01751">
    <property type="entry name" value="Toprim"/>
    <property type="match status" value="1"/>
</dbReference>
<dbReference type="Pfam" id="PF01396">
    <property type="entry name" value="Zn_ribbon_Top1"/>
    <property type="match status" value="3"/>
</dbReference>
<dbReference type="PRINTS" id="PR00417">
    <property type="entry name" value="PRTPISMRASEI"/>
</dbReference>
<dbReference type="SMART" id="SM00437">
    <property type="entry name" value="TOP1Ac"/>
    <property type="match status" value="1"/>
</dbReference>
<dbReference type="SMART" id="SM00436">
    <property type="entry name" value="TOP1Bc"/>
    <property type="match status" value="1"/>
</dbReference>
<dbReference type="SMART" id="SM00493">
    <property type="entry name" value="TOPRIM"/>
    <property type="match status" value="1"/>
</dbReference>
<dbReference type="SUPFAM" id="SSF56712">
    <property type="entry name" value="Prokaryotic type I DNA topoisomerase"/>
    <property type="match status" value="1"/>
</dbReference>
<dbReference type="SUPFAM" id="SSF57783">
    <property type="entry name" value="Zinc beta-ribbon"/>
    <property type="match status" value="3"/>
</dbReference>
<dbReference type="PROSITE" id="PS00396">
    <property type="entry name" value="TOPO_IA_1"/>
    <property type="match status" value="1"/>
</dbReference>
<dbReference type="PROSITE" id="PS52039">
    <property type="entry name" value="TOPO_IA_2"/>
    <property type="match status" value="1"/>
</dbReference>
<dbReference type="PROSITE" id="PS50880">
    <property type="entry name" value="TOPRIM"/>
    <property type="match status" value="1"/>
</dbReference>
<evidence type="ECO:0000255" key="1">
    <source>
        <dbReference type="HAMAP-Rule" id="MF_00952"/>
    </source>
</evidence>
<evidence type="ECO:0000255" key="2">
    <source>
        <dbReference type="PROSITE-ProRule" id="PRU01383"/>
    </source>
</evidence>
<sequence length="736" mass="83196">MKHLIIVESPAKAKTIKNFLDKNYEVIASKGHVRDLSKFALGIKIDETGFTPNYVVDKDHKELVKQIIELSKKASITYIATDEDREGEAIGYHVACLIGGKLESYPRIVFHEITQNAILNALKTPRKIDMSKVNAQQARRFLDRIVGFKLSSLIASKITKGLSAGRVQSAALKLVIDKEREIKAFKPLTYFTLDAYFESHLEAQLISYKGNKLKAQELIDEKKAQEIKNELEKESYAISSIVKKSKKSPTPPPFMTSTLQQSASSLLGFSPTKTMSIAQKLYEGVATPQGVMGVITYMRTDSLNIAKEALEEARNKILKDYGKDYLPPKAKVYSSKNKNAQEAHEAIRPTSIILEPNALKDYLKPEELRLYTLIYKRFLASQMQDALFESQSVVVACEKGEFKASGRKLLFDGYYKILGNDDKDKLLPNLKENDPIKLEKLESNAHVTEPPARYSEASLIKVLESLGIGRPSTYAPTISLLQNRDYIKVEKKQISALESAFKVIEILEKHFEEIVDSKFSASLEEELDNIAQNKADYQQVLKDFYYPFMDKIEAGKKNIISQKVHEKTGQSCPKCGGELVKKNSRYGEFIACNNYPKCKYVKQTESANDEADQELCEKCGGEMVQKFSRNGAFLACNNYPECKNTKSLKNTPNAKETIEGVKCPECGGDIALKRSKKGSFYGCNNYPKCNFLSNHKPINKRCEKCHYLMSERIYRKKKAHECIKCKERVFLEEDNG</sequence>
<proteinExistence type="evidence at protein level"/>
<feature type="chain" id="PRO_0000145150" description="DNA topoisomerase 1">
    <location>
        <begin position="1"/>
        <end position="736"/>
    </location>
</feature>
<feature type="domain" description="Toprim" evidence="1">
    <location>
        <begin position="2"/>
        <end position="113"/>
    </location>
</feature>
<feature type="domain" description="Topo IA-type catalytic" evidence="2">
    <location>
        <begin position="129"/>
        <end position="552"/>
    </location>
</feature>
<feature type="zinc finger region" description="C4-type 1">
    <location>
        <begin position="572"/>
        <end position="598"/>
    </location>
</feature>
<feature type="zinc finger region" description="C4-type 2">
    <location>
        <begin position="616"/>
        <end position="642"/>
    </location>
</feature>
<feature type="zinc finger region" description="C4-type 3">
    <location>
        <begin position="663"/>
        <end position="689"/>
    </location>
</feature>
<feature type="zinc finger region" description="C4-type 4">
    <location>
        <begin position="702"/>
        <end position="725"/>
    </location>
</feature>
<feature type="region of interest" description="Interaction with DNA" evidence="1">
    <location>
        <begin position="163"/>
        <end position="168"/>
    </location>
</feature>
<feature type="active site" description="O-(5'-phospho-DNA)-tyrosine intermediate" evidence="2">
    <location>
        <position position="297"/>
    </location>
</feature>
<feature type="binding site" evidence="1">
    <location>
        <position position="8"/>
    </location>
    <ligand>
        <name>Mg(2+)</name>
        <dbReference type="ChEBI" id="CHEBI:18420"/>
        <note>catalytic</note>
    </ligand>
</feature>
<feature type="binding site" evidence="1">
    <location>
        <position position="82"/>
    </location>
    <ligand>
        <name>Mg(2+)</name>
        <dbReference type="ChEBI" id="CHEBI:18420"/>
        <note>catalytic</note>
    </ligand>
</feature>
<feature type="site" description="Interaction with DNA" evidence="1">
    <location>
        <position position="32"/>
    </location>
</feature>
<feature type="site" description="Interaction with DNA" evidence="1">
    <location>
        <position position="139"/>
    </location>
</feature>
<feature type="site" description="Interaction with DNA" evidence="1">
    <location>
        <position position="140"/>
    </location>
</feature>
<feature type="site" description="Interaction with DNA" evidence="1">
    <location>
        <position position="143"/>
    </location>
</feature>
<feature type="site" description="Interaction with DNA" evidence="1">
    <location>
        <position position="299"/>
    </location>
</feature>
<feature type="site" description="Interaction with DNA" evidence="1">
    <location>
        <position position="484"/>
    </location>
</feature>
<name>TOP1_HELPY</name>
<reference key="1">
    <citation type="journal article" date="1997" name="Nature">
        <title>The complete genome sequence of the gastric pathogen Helicobacter pylori.</title>
        <authorList>
            <person name="Tomb J.-F."/>
            <person name="White O."/>
            <person name="Kerlavage A.R."/>
            <person name="Clayton R.A."/>
            <person name="Sutton G.G."/>
            <person name="Fleischmann R.D."/>
            <person name="Ketchum K.A."/>
            <person name="Klenk H.-P."/>
            <person name="Gill S.R."/>
            <person name="Dougherty B.A."/>
            <person name="Nelson K.E."/>
            <person name="Quackenbush J."/>
            <person name="Zhou L."/>
            <person name="Kirkness E.F."/>
            <person name="Peterson S.N."/>
            <person name="Loftus B.J."/>
            <person name="Richardson D.L."/>
            <person name="Dodson R.J."/>
            <person name="Khalak H.G."/>
            <person name="Glodek A."/>
            <person name="McKenney K."/>
            <person name="FitzGerald L.M."/>
            <person name="Lee N."/>
            <person name="Adams M.D."/>
            <person name="Hickey E.K."/>
            <person name="Berg D.E."/>
            <person name="Gocayne J.D."/>
            <person name="Utterback T.R."/>
            <person name="Peterson J.D."/>
            <person name="Kelley J.M."/>
            <person name="Cotton M.D."/>
            <person name="Weidman J.F."/>
            <person name="Fujii C."/>
            <person name="Bowman C."/>
            <person name="Watthey L."/>
            <person name="Wallin E."/>
            <person name="Hayes W.S."/>
            <person name="Borodovsky M."/>
            <person name="Karp P.D."/>
            <person name="Smith H.O."/>
            <person name="Fraser C.M."/>
            <person name="Venter J.C."/>
        </authorList>
    </citation>
    <scope>NUCLEOTIDE SEQUENCE [LARGE SCALE GENOMIC DNA]</scope>
    <source>
        <strain>ATCC 700392 / 26695</strain>
    </source>
</reference>
<organism>
    <name type="scientific">Helicobacter pylori (strain ATCC 700392 / 26695)</name>
    <name type="common">Campylobacter pylori</name>
    <dbReference type="NCBI Taxonomy" id="85962"/>
    <lineage>
        <taxon>Bacteria</taxon>
        <taxon>Pseudomonadati</taxon>
        <taxon>Campylobacterota</taxon>
        <taxon>Epsilonproteobacteria</taxon>
        <taxon>Campylobacterales</taxon>
        <taxon>Helicobacteraceae</taxon>
        <taxon>Helicobacter</taxon>
    </lineage>
</organism>